<sequence>MVREEVAGSTQTLQWKCVESRVDSKRLYYGRFILSPLRKGQADTVGIALRRALLGEIEGTCITRAKFGSVPHEYSTIAGIEESVQEILLNLKEIVLRSNLYGVRDASICVKGPRYITAQDIILPPSVEIVDTAQPIANLTEPIDFCIDLQIKRDRGYQTELRKNYQDGSYPIDAVSMPVRNLNYSIFSCGNGNEKHEILFLEIWTNGSLTPKEALYEASRNLIDLFLPFLHAEEEGTSFEENKNRFTPPLFTFQKRLTNLKKNKKGIPLNCIFIDQLELTSRTYNCLKRANIHTLLDLLSKTEEDLLRIDSFRMEDRKHIWDTLEKHLPIDLLKNKLSF</sequence>
<protein>
    <recommendedName>
        <fullName evidence="1">DNA-directed RNA polymerase subunit alpha</fullName>
        <shortName evidence="1">PEP</shortName>
        <ecNumber evidence="1">2.7.7.6</ecNumber>
    </recommendedName>
    <alternativeName>
        <fullName evidence="1">Plastid-encoded RNA polymerase subunit alpha</fullName>
        <shortName evidence="1">RNA polymerase subunit alpha</shortName>
    </alternativeName>
</protein>
<geneLocation type="chloroplast"/>
<comment type="function">
    <text evidence="1">DNA-dependent RNA polymerase catalyzes the transcription of DNA into RNA using the four ribonucleoside triphosphates as substrates.</text>
</comment>
<comment type="catalytic activity">
    <reaction evidence="1">
        <text>RNA(n) + a ribonucleoside 5'-triphosphate = RNA(n+1) + diphosphate</text>
        <dbReference type="Rhea" id="RHEA:21248"/>
        <dbReference type="Rhea" id="RHEA-COMP:14527"/>
        <dbReference type="Rhea" id="RHEA-COMP:17342"/>
        <dbReference type="ChEBI" id="CHEBI:33019"/>
        <dbReference type="ChEBI" id="CHEBI:61557"/>
        <dbReference type="ChEBI" id="CHEBI:140395"/>
        <dbReference type="EC" id="2.7.7.6"/>
    </reaction>
</comment>
<comment type="subunit">
    <text evidence="1">In plastids the minimal PEP RNA polymerase catalytic core is composed of four subunits: alpha, beta, beta', and beta''. When a (nuclear-encoded) sigma factor is associated with the core the holoenzyme is formed, which can initiate transcription.</text>
</comment>
<comment type="subcellular location">
    <subcellularLocation>
        <location>Plastid</location>
        <location>Chloroplast</location>
    </subcellularLocation>
</comment>
<comment type="domain">
    <text evidence="1">The N-terminal domain is essential for RNAP assembly and basal transcription, whereas the C-terminal domain is involved in interaction with transcriptional regulators and with upstream promoter elements.</text>
</comment>
<comment type="similarity">
    <text evidence="1">Belongs to the RNA polymerase alpha chain family.</text>
</comment>
<gene>
    <name evidence="1" type="primary">rpoA</name>
</gene>
<name>RPOA_FESFE</name>
<keyword id="KW-0150">Chloroplast</keyword>
<keyword id="KW-0240">DNA-directed RNA polymerase</keyword>
<keyword id="KW-0548">Nucleotidyltransferase</keyword>
<keyword id="KW-0934">Plastid</keyword>
<keyword id="KW-0804">Transcription</keyword>
<keyword id="KW-0808">Transferase</keyword>
<accession>P93968</accession>
<feature type="chain" id="PRO_0000175456" description="DNA-directed RNA polymerase subunit alpha">
    <location>
        <begin position="1"/>
        <end position="339"/>
    </location>
</feature>
<feature type="region of interest" description="Alpha N-terminal domain (alpha-NTD)" evidence="1">
    <location>
        <begin position="1"/>
        <end position="233"/>
    </location>
</feature>
<feature type="region of interest" description="Alpha C-terminal domain (alpha-CTD)" evidence="1">
    <location>
        <begin position="264"/>
        <end position="339"/>
    </location>
</feature>
<organism>
    <name type="scientific">Festucopsis festucoides</name>
    <dbReference type="NCBI Taxonomy" id="72455"/>
    <lineage>
        <taxon>Eukaryota</taxon>
        <taxon>Viridiplantae</taxon>
        <taxon>Streptophyta</taxon>
        <taxon>Embryophyta</taxon>
        <taxon>Tracheophyta</taxon>
        <taxon>Spermatophyta</taxon>
        <taxon>Magnoliopsida</taxon>
        <taxon>Liliopsida</taxon>
        <taxon>Poales</taxon>
        <taxon>Poaceae</taxon>
        <taxon>BOP clade</taxon>
        <taxon>Pooideae</taxon>
        <taxon>Triticodae</taxon>
        <taxon>Triticeae</taxon>
        <taxon>Hordeinae</taxon>
        <taxon>Festucopsis</taxon>
    </lineage>
</organism>
<reference key="1">
    <citation type="journal article" date="1997" name="Mol. Phylogenet. Evol.">
        <title>Phylogenetic analysis of the Triticeae (Poaceae) based on rpoA sequence data.</title>
        <authorList>
            <person name="Petersen G."/>
            <person name="Seberg O."/>
        </authorList>
    </citation>
    <scope>NUCLEOTIDE SEQUENCE [GENOMIC DNA]</scope>
    <source>
        <strain>H6731</strain>
        <tissue>Leaf</tissue>
    </source>
</reference>
<proteinExistence type="inferred from homology"/>
<dbReference type="EC" id="2.7.7.6" evidence="1"/>
<dbReference type="EMBL" id="Z77770">
    <property type="protein sequence ID" value="CAB01387.1"/>
    <property type="molecule type" value="Genomic_DNA"/>
</dbReference>
<dbReference type="SMR" id="P93968"/>
<dbReference type="GO" id="GO:0009507">
    <property type="term" value="C:chloroplast"/>
    <property type="evidence" value="ECO:0007669"/>
    <property type="project" value="UniProtKB-SubCell"/>
</dbReference>
<dbReference type="GO" id="GO:0000428">
    <property type="term" value="C:DNA-directed RNA polymerase complex"/>
    <property type="evidence" value="ECO:0007669"/>
    <property type="project" value="UniProtKB-KW"/>
</dbReference>
<dbReference type="GO" id="GO:0005739">
    <property type="term" value="C:mitochondrion"/>
    <property type="evidence" value="ECO:0007669"/>
    <property type="project" value="GOC"/>
</dbReference>
<dbReference type="GO" id="GO:0003677">
    <property type="term" value="F:DNA binding"/>
    <property type="evidence" value="ECO:0007669"/>
    <property type="project" value="UniProtKB-UniRule"/>
</dbReference>
<dbReference type="GO" id="GO:0003899">
    <property type="term" value="F:DNA-directed RNA polymerase activity"/>
    <property type="evidence" value="ECO:0007669"/>
    <property type="project" value="UniProtKB-UniRule"/>
</dbReference>
<dbReference type="GO" id="GO:0046983">
    <property type="term" value="F:protein dimerization activity"/>
    <property type="evidence" value="ECO:0007669"/>
    <property type="project" value="InterPro"/>
</dbReference>
<dbReference type="GO" id="GO:0006351">
    <property type="term" value="P:DNA-templated transcription"/>
    <property type="evidence" value="ECO:0007669"/>
    <property type="project" value="UniProtKB-UniRule"/>
</dbReference>
<dbReference type="CDD" id="cd06928">
    <property type="entry name" value="RNAP_alpha_NTD"/>
    <property type="match status" value="1"/>
</dbReference>
<dbReference type="FunFam" id="2.170.120.12:FF:000001">
    <property type="entry name" value="DNA-directed RNA polymerase subunit alpha"/>
    <property type="match status" value="1"/>
</dbReference>
<dbReference type="Gene3D" id="1.10.150.20">
    <property type="entry name" value="5' to 3' exonuclease, C-terminal subdomain"/>
    <property type="match status" value="1"/>
</dbReference>
<dbReference type="Gene3D" id="2.170.120.12">
    <property type="entry name" value="DNA-directed RNA polymerase, insert domain"/>
    <property type="match status" value="1"/>
</dbReference>
<dbReference type="Gene3D" id="3.30.1360.10">
    <property type="entry name" value="RNA polymerase, RBP11-like subunit"/>
    <property type="match status" value="1"/>
</dbReference>
<dbReference type="HAMAP" id="MF_00059">
    <property type="entry name" value="RNApol_bact_RpoA"/>
    <property type="match status" value="1"/>
</dbReference>
<dbReference type="InterPro" id="IPR011262">
    <property type="entry name" value="DNA-dir_RNA_pol_insert"/>
</dbReference>
<dbReference type="InterPro" id="IPR011263">
    <property type="entry name" value="DNA-dir_RNA_pol_RpoA/D/Rpb3"/>
</dbReference>
<dbReference type="InterPro" id="IPR011773">
    <property type="entry name" value="DNA-dir_RpoA"/>
</dbReference>
<dbReference type="InterPro" id="IPR036603">
    <property type="entry name" value="RBP11-like"/>
</dbReference>
<dbReference type="InterPro" id="IPR011260">
    <property type="entry name" value="RNAP_asu_C"/>
</dbReference>
<dbReference type="InterPro" id="IPR036643">
    <property type="entry name" value="RNApol_insert_sf"/>
</dbReference>
<dbReference type="NCBIfam" id="TIGR02027">
    <property type="entry name" value="rpoA"/>
    <property type="match status" value="1"/>
</dbReference>
<dbReference type="Pfam" id="PF01000">
    <property type="entry name" value="RNA_pol_A_bac"/>
    <property type="match status" value="1"/>
</dbReference>
<dbReference type="Pfam" id="PF03118">
    <property type="entry name" value="RNA_pol_A_CTD"/>
    <property type="match status" value="1"/>
</dbReference>
<dbReference type="Pfam" id="PF01193">
    <property type="entry name" value="RNA_pol_L"/>
    <property type="match status" value="1"/>
</dbReference>
<dbReference type="SMART" id="SM00662">
    <property type="entry name" value="RPOLD"/>
    <property type="match status" value="1"/>
</dbReference>
<dbReference type="SUPFAM" id="SSF47789">
    <property type="entry name" value="C-terminal domain of RNA polymerase alpha subunit"/>
    <property type="match status" value="1"/>
</dbReference>
<dbReference type="SUPFAM" id="SSF56553">
    <property type="entry name" value="Insert subdomain of RNA polymerase alpha subunit"/>
    <property type="match status" value="1"/>
</dbReference>
<dbReference type="SUPFAM" id="SSF55257">
    <property type="entry name" value="RBP11-like subunits of RNA polymerase"/>
    <property type="match status" value="1"/>
</dbReference>
<evidence type="ECO:0000255" key="1">
    <source>
        <dbReference type="HAMAP-Rule" id="MF_00059"/>
    </source>
</evidence>